<protein>
    <recommendedName>
        <fullName evidence="1">N-acetylneuraminate epimerase</fullName>
        <ecNumber evidence="1">5.1.3.24</ecNumber>
    </recommendedName>
    <alternativeName>
        <fullName evidence="1">N-acetylneuraminate mutarotase</fullName>
        <shortName evidence="1">Neu5Ac mutarotase</shortName>
    </alternativeName>
    <alternativeName>
        <fullName evidence="1">Sialic acid epimerase</fullName>
    </alternativeName>
</protein>
<reference key="1">
    <citation type="journal article" date="2008" name="Genome Res.">
        <title>Comparative genome analysis of Salmonella enteritidis PT4 and Salmonella gallinarum 287/91 provides insights into evolutionary and host adaptation pathways.</title>
        <authorList>
            <person name="Thomson N.R."/>
            <person name="Clayton D.J."/>
            <person name="Windhorst D."/>
            <person name="Vernikos G."/>
            <person name="Davidson S."/>
            <person name="Churcher C."/>
            <person name="Quail M.A."/>
            <person name="Stevens M."/>
            <person name="Jones M.A."/>
            <person name="Watson M."/>
            <person name="Barron A."/>
            <person name="Layton A."/>
            <person name="Pickard D."/>
            <person name="Kingsley R.A."/>
            <person name="Bignell A."/>
            <person name="Clark L."/>
            <person name="Harris B."/>
            <person name="Ormond D."/>
            <person name="Abdellah Z."/>
            <person name="Brooks K."/>
            <person name="Cherevach I."/>
            <person name="Chillingworth T."/>
            <person name="Woodward J."/>
            <person name="Norberczak H."/>
            <person name="Lord A."/>
            <person name="Arrowsmith C."/>
            <person name="Jagels K."/>
            <person name="Moule S."/>
            <person name="Mungall K."/>
            <person name="Saunders M."/>
            <person name="Whitehead S."/>
            <person name="Chabalgoity J.A."/>
            <person name="Maskell D."/>
            <person name="Humphreys T."/>
            <person name="Roberts M."/>
            <person name="Barrow P.A."/>
            <person name="Dougan G."/>
            <person name="Parkhill J."/>
        </authorList>
    </citation>
    <scope>NUCLEOTIDE SEQUENCE [LARGE SCALE GENOMIC DNA]</scope>
    <source>
        <strain>P125109</strain>
    </source>
</reference>
<name>NANM_SALEP</name>
<keyword id="KW-0119">Carbohydrate metabolism</keyword>
<keyword id="KW-0413">Isomerase</keyword>
<keyword id="KW-0880">Kelch repeat</keyword>
<keyword id="KW-0574">Periplasm</keyword>
<keyword id="KW-0677">Repeat</keyword>
<keyword id="KW-0732">Signal</keyword>
<accession>B5R066</accession>
<dbReference type="EC" id="5.1.3.24" evidence="1"/>
<dbReference type="EMBL" id="AM933172">
    <property type="protein sequence ID" value="CAR32575.1"/>
    <property type="molecule type" value="Genomic_DNA"/>
</dbReference>
<dbReference type="RefSeq" id="WP_000525764.1">
    <property type="nucleotide sequence ID" value="NC_011294.1"/>
</dbReference>
<dbReference type="SMR" id="B5R066"/>
<dbReference type="KEGG" id="set:SEN0991"/>
<dbReference type="HOGENOM" id="CLU_061535_0_0_6"/>
<dbReference type="Proteomes" id="UP000000613">
    <property type="component" value="Chromosome"/>
</dbReference>
<dbReference type="GO" id="GO:0042597">
    <property type="term" value="C:periplasmic space"/>
    <property type="evidence" value="ECO:0007669"/>
    <property type="project" value="UniProtKB-SubCell"/>
</dbReference>
<dbReference type="GO" id="GO:0016857">
    <property type="term" value="F:racemase and epimerase activity, acting on carbohydrates and derivatives"/>
    <property type="evidence" value="ECO:0007669"/>
    <property type="project" value="UniProtKB-UniRule"/>
</dbReference>
<dbReference type="Gene3D" id="2.120.10.80">
    <property type="entry name" value="Kelch-type beta propeller"/>
    <property type="match status" value="2"/>
</dbReference>
<dbReference type="HAMAP" id="MF_01195">
    <property type="entry name" value="NanM"/>
    <property type="match status" value="1"/>
</dbReference>
<dbReference type="InterPro" id="IPR015915">
    <property type="entry name" value="Kelch-typ_b-propeller"/>
</dbReference>
<dbReference type="InterPro" id="IPR056734">
    <property type="entry name" value="NANM"/>
</dbReference>
<dbReference type="InterPro" id="IPR019936">
    <property type="entry name" value="NanM_proteobact"/>
</dbReference>
<dbReference type="NCBIfam" id="TIGR03547">
    <property type="entry name" value="muta_rot_YjhT"/>
    <property type="match status" value="1"/>
</dbReference>
<dbReference type="NCBIfam" id="NF010730">
    <property type="entry name" value="PRK14131.1"/>
    <property type="match status" value="1"/>
</dbReference>
<dbReference type="PANTHER" id="PTHR46093">
    <property type="entry name" value="ACYL-COA-BINDING DOMAIN-CONTAINING PROTEIN 5"/>
    <property type="match status" value="1"/>
</dbReference>
<dbReference type="PANTHER" id="PTHR46093:SF18">
    <property type="entry name" value="FIBRONECTIN TYPE-III DOMAIN-CONTAINING PROTEIN"/>
    <property type="match status" value="1"/>
</dbReference>
<dbReference type="Pfam" id="PF24996">
    <property type="entry name" value="NANM"/>
    <property type="match status" value="1"/>
</dbReference>
<dbReference type="SUPFAM" id="SSF117281">
    <property type="entry name" value="Kelch motif"/>
    <property type="match status" value="1"/>
</dbReference>
<proteinExistence type="inferred from homology"/>
<sequence>MGMQMKNFKKMMTLMALCLSVAITTSGYATTLPDIPEPLKNGTGAIDNNGVIYVGLGTAGTSWYKIDLKKQHKDWERIKSFPGGAREQSVSVFLNDELYVFGGVGKKNSESPLQVYSDVYKYSPVKNTWQKVDTISPVGLTGHTGVKLNETMVLITGGVNEHIFDKYFIDIEAADESEKNKVIYNYFNKPAKDYFFNKIVFIYNAKENTWKNAGELPGAGTAGSSSVMENNFLMLINGELKPGLRTDVIYRAMWDNDKLTWLKNSQLPPSPGEQQQEGLAGAFSGYSHGVLLVGGGANFPGAKQNYTNGKFYSHEGINKKWRDEVYGLVNGHWQYMGKMKQPLGYGVSVSYGDEVFLIGGENAKGKPVSSVTSFTMRDGNLLIK</sequence>
<evidence type="ECO:0000255" key="1">
    <source>
        <dbReference type="HAMAP-Rule" id="MF_01195"/>
    </source>
</evidence>
<organism>
    <name type="scientific">Salmonella enteritidis PT4 (strain P125109)</name>
    <dbReference type="NCBI Taxonomy" id="550537"/>
    <lineage>
        <taxon>Bacteria</taxon>
        <taxon>Pseudomonadati</taxon>
        <taxon>Pseudomonadota</taxon>
        <taxon>Gammaproteobacteria</taxon>
        <taxon>Enterobacterales</taxon>
        <taxon>Enterobacteriaceae</taxon>
        <taxon>Salmonella</taxon>
    </lineage>
</organism>
<comment type="function">
    <text evidence="1">Converts alpha-N-acetylneuranimic acid (Neu5Ac) to the beta-anomer, accelerating the equilibrium between the alpha- and beta-anomers. Probably facilitates sialidase-negative bacteria to compete successfully for limited amounts of extracellular Neu5Ac, which is likely taken up in the beta-anomer. In addition, the rapid removal of sialic acid from solution might be advantageous to the bacterium to damp down host responses.</text>
</comment>
<comment type="catalytic activity">
    <reaction evidence="1">
        <text>N-acetyl-alpha-neuraminate = N-acetyl-beta-neuraminate</text>
        <dbReference type="Rhea" id="RHEA:25233"/>
        <dbReference type="ChEBI" id="CHEBI:58705"/>
        <dbReference type="ChEBI" id="CHEBI:58770"/>
        <dbReference type="EC" id="5.1.3.24"/>
    </reaction>
</comment>
<comment type="subunit">
    <text evidence="1">Homodimer.</text>
</comment>
<comment type="subcellular location">
    <subcellularLocation>
        <location evidence="1">Periplasm</location>
    </subcellularLocation>
</comment>
<comment type="similarity">
    <text evidence="1">Belongs to the NanM family.</text>
</comment>
<feature type="signal peptide" evidence="1">
    <location>
        <begin position="1"/>
        <end position="29"/>
    </location>
</feature>
<feature type="chain" id="PRO_5000397562" description="N-acetylneuraminate epimerase">
    <location>
        <begin position="30"/>
        <end position="384"/>
    </location>
</feature>
<feature type="repeat" description="Kelch 1">
    <location>
        <begin position="51"/>
        <end position="95"/>
    </location>
</feature>
<feature type="repeat" description="Kelch 2">
    <location>
        <begin position="97"/>
        <end position="149"/>
    </location>
</feature>
<feature type="repeat" description="Kelch 3">
    <location>
        <begin position="151"/>
        <end position="184"/>
    </location>
</feature>
<feature type="repeat" description="Kelch 4">
    <location>
        <begin position="185"/>
        <end position="230"/>
    </location>
</feature>
<feature type="repeat" description="Kelch 5">
    <location>
        <begin position="233"/>
        <end position="282"/>
    </location>
</feature>
<feature type="repeat" description="Kelch 6">
    <location>
        <begin position="304"/>
        <end position="353"/>
    </location>
</feature>
<feature type="repeat" description="Kelch 7">
    <location>
        <begin position="355"/>
        <end position="384"/>
    </location>
</feature>
<feature type="active site" description="Proton acceptor" evidence="1">
    <location>
        <position position="239"/>
    </location>
</feature>
<gene>
    <name evidence="1" type="primary">nanM</name>
    <name type="ordered locus">SEN0991</name>
</gene>